<organism>
    <name type="scientific">Picosynechococcus sp. (strain ATCC 27264 / PCC 7002 / PR-6)</name>
    <name type="common">Agmenellum quadruplicatum</name>
    <dbReference type="NCBI Taxonomy" id="32049"/>
    <lineage>
        <taxon>Bacteria</taxon>
        <taxon>Bacillati</taxon>
        <taxon>Cyanobacteriota</taxon>
        <taxon>Cyanophyceae</taxon>
        <taxon>Oscillatoriophycideae</taxon>
        <taxon>Chroococcales</taxon>
        <taxon>Geminocystaceae</taxon>
        <taxon>Picosynechococcus</taxon>
    </lineage>
</organism>
<gene>
    <name evidence="1" type="primary">groES</name>
    <name evidence="1" type="synonym">groS</name>
    <name type="ordered locus">SYNPCC7002_A2457</name>
</gene>
<dbReference type="EMBL" id="CP000951">
    <property type="protein sequence ID" value="ACB00435.1"/>
    <property type="molecule type" value="Genomic_DNA"/>
</dbReference>
<dbReference type="RefSeq" id="WP_012308053.1">
    <property type="nucleotide sequence ID" value="NZ_JAHHPU010000003.1"/>
</dbReference>
<dbReference type="SMR" id="B1XK80"/>
<dbReference type="STRING" id="32049.SYNPCC7002_A2457"/>
<dbReference type="KEGG" id="syp:SYNPCC7002_A2457"/>
<dbReference type="eggNOG" id="COG0234">
    <property type="taxonomic scope" value="Bacteria"/>
</dbReference>
<dbReference type="HOGENOM" id="CLU_132825_2_1_3"/>
<dbReference type="Proteomes" id="UP000001688">
    <property type="component" value="Chromosome"/>
</dbReference>
<dbReference type="GO" id="GO:0005737">
    <property type="term" value="C:cytoplasm"/>
    <property type="evidence" value="ECO:0007669"/>
    <property type="project" value="UniProtKB-SubCell"/>
</dbReference>
<dbReference type="GO" id="GO:0005524">
    <property type="term" value="F:ATP binding"/>
    <property type="evidence" value="ECO:0007669"/>
    <property type="project" value="InterPro"/>
</dbReference>
<dbReference type="GO" id="GO:0046872">
    <property type="term" value="F:metal ion binding"/>
    <property type="evidence" value="ECO:0007669"/>
    <property type="project" value="TreeGrafter"/>
</dbReference>
<dbReference type="GO" id="GO:0044183">
    <property type="term" value="F:protein folding chaperone"/>
    <property type="evidence" value="ECO:0007669"/>
    <property type="project" value="InterPro"/>
</dbReference>
<dbReference type="GO" id="GO:0051087">
    <property type="term" value="F:protein-folding chaperone binding"/>
    <property type="evidence" value="ECO:0007669"/>
    <property type="project" value="TreeGrafter"/>
</dbReference>
<dbReference type="GO" id="GO:0051082">
    <property type="term" value="F:unfolded protein binding"/>
    <property type="evidence" value="ECO:0007669"/>
    <property type="project" value="TreeGrafter"/>
</dbReference>
<dbReference type="GO" id="GO:0051085">
    <property type="term" value="P:chaperone cofactor-dependent protein refolding"/>
    <property type="evidence" value="ECO:0007669"/>
    <property type="project" value="TreeGrafter"/>
</dbReference>
<dbReference type="CDD" id="cd00320">
    <property type="entry name" value="cpn10"/>
    <property type="match status" value="1"/>
</dbReference>
<dbReference type="FunFam" id="2.30.33.40:FF:000001">
    <property type="entry name" value="10 kDa chaperonin"/>
    <property type="match status" value="1"/>
</dbReference>
<dbReference type="Gene3D" id="2.30.33.40">
    <property type="entry name" value="GroES chaperonin"/>
    <property type="match status" value="1"/>
</dbReference>
<dbReference type="HAMAP" id="MF_00580">
    <property type="entry name" value="CH10"/>
    <property type="match status" value="1"/>
</dbReference>
<dbReference type="InterPro" id="IPR020818">
    <property type="entry name" value="Chaperonin_GroES"/>
</dbReference>
<dbReference type="InterPro" id="IPR037124">
    <property type="entry name" value="Chaperonin_GroES_sf"/>
</dbReference>
<dbReference type="InterPro" id="IPR018369">
    <property type="entry name" value="Chaprnonin_Cpn10_CS"/>
</dbReference>
<dbReference type="InterPro" id="IPR011032">
    <property type="entry name" value="GroES-like_sf"/>
</dbReference>
<dbReference type="NCBIfam" id="NF001527">
    <property type="entry name" value="PRK00364.1-2"/>
    <property type="match status" value="1"/>
</dbReference>
<dbReference type="NCBIfam" id="NF001530">
    <property type="entry name" value="PRK00364.1-6"/>
    <property type="match status" value="1"/>
</dbReference>
<dbReference type="NCBIfam" id="NF001531">
    <property type="entry name" value="PRK00364.2-2"/>
    <property type="match status" value="1"/>
</dbReference>
<dbReference type="NCBIfam" id="NF001533">
    <property type="entry name" value="PRK00364.2-4"/>
    <property type="match status" value="1"/>
</dbReference>
<dbReference type="NCBIfam" id="NF001534">
    <property type="entry name" value="PRK00364.2-5"/>
    <property type="match status" value="1"/>
</dbReference>
<dbReference type="PANTHER" id="PTHR10772">
    <property type="entry name" value="10 KDA HEAT SHOCK PROTEIN"/>
    <property type="match status" value="1"/>
</dbReference>
<dbReference type="PANTHER" id="PTHR10772:SF58">
    <property type="entry name" value="CO-CHAPERONIN GROES"/>
    <property type="match status" value="1"/>
</dbReference>
<dbReference type="Pfam" id="PF00166">
    <property type="entry name" value="Cpn10"/>
    <property type="match status" value="1"/>
</dbReference>
<dbReference type="PRINTS" id="PR00297">
    <property type="entry name" value="CHAPERONIN10"/>
</dbReference>
<dbReference type="SMART" id="SM00883">
    <property type="entry name" value="Cpn10"/>
    <property type="match status" value="1"/>
</dbReference>
<dbReference type="SUPFAM" id="SSF50129">
    <property type="entry name" value="GroES-like"/>
    <property type="match status" value="1"/>
</dbReference>
<dbReference type="PROSITE" id="PS00681">
    <property type="entry name" value="CHAPERONINS_CPN10"/>
    <property type="match status" value="1"/>
</dbReference>
<accession>B1XK80</accession>
<feature type="chain" id="PRO_1000129716" description="Co-chaperonin GroES">
    <location>
        <begin position="1"/>
        <end position="103"/>
    </location>
</feature>
<sequence length="103" mass="10838">MAAISINVSTLKPLGDRVFVKVSESEEKTAGGILLPDSAKEKPQIGEVVAVGEGKRNDDGSRSAVDVKVGDKVLYSKYAGTDIKLSGDDYVLLSEKDILATVA</sequence>
<evidence type="ECO:0000255" key="1">
    <source>
        <dbReference type="HAMAP-Rule" id="MF_00580"/>
    </source>
</evidence>
<proteinExistence type="inferred from homology"/>
<keyword id="KW-0143">Chaperone</keyword>
<keyword id="KW-0963">Cytoplasm</keyword>
<keyword id="KW-1185">Reference proteome</keyword>
<protein>
    <recommendedName>
        <fullName evidence="1">Co-chaperonin GroES</fullName>
    </recommendedName>
    <alternativeName>
        <fullName evidence="1">10 kDa chaperonin</fullName>
    </alternativeName>
    <alternativeName>
        <fullName evidence="1">Chaperonin-10</fullName>
        <shortName evidence="1">Cpn10</shortName>
    </alternativeName>
</protein>
<name>CH10_PICP2</name>
<reference key="1">
    <citation type="submission" date="2008-02" db="EMBL/GenBank/DDBJ databases">
        <title>Complete sequence of Synechococcus sp. PCC 7002.</title>
        <authorList>
            <person name="Li T."/>
            <person name="Zhao J."/>
            <person name="Zhao C."/>
            <person name="Liu Z."/>
            <person name="Zhao F."/>
            <person name="Marquardt J."/>
            <person name="Nomura C.T."/>
            <person name="Persson S."/>
            <person name="Detter J.C."/>
            <person name="Richardson P.M."/>
            <person name="Lanz C."/>
            <person name="Schuster S.C."/>
            <person name="Wang J."/>
            <person name="Li S."/>
            <person name="Huang X."/>
            <person name="Cai T."/>
            <person name="Yu Z."/>
            <person name="Luo J."/>
            <person name="Zhao J."/>
            <person name="Bryant D.A."/>
        </authorList>
    </citation>
    <scope>NUCLEOTIDE SEQUENCE [LARGE SCALE GENOMIC DNA]</scope>
    <source>
        <strain>ATCC 27264 / PCC 7002 / PR-6</strain>
    </source>
</reference>
<comment type="function">
    <text evidence="1">Together with the chaperonin GroEL, plays an essential role in assisting protein folding. The GroEL-GroES system forms a nano-cage that allows encapsulation of the non-native substrate proteins and provides a physical environment optimized to promote and accelerate protein folding. GroES binds to the apical surface of the GroEL ring, thereby capping the opening of the GroEL channel.</text>
</comment>
<comment type="subunit">
    <text evidence="1">Heptamer of 7 subunits arranged in a ring. Interacts with the chaperonin GroEL.</text>
</comment>
<comment type="subcellular location">
    <subcellularLocation>
        <location evidence="1">Cytoplasm</location>
    </subcellularLocation>
</comment>
<comment type="similarity">
    <text evidence="1">Belongs to the GroES chaperonin family.</text>
</comment>